<feature type="chain" id="PRO_1000100162" description="GTP cyclohydrolase 1">
    <location>
        <begin position="1"/>
        <end position="213"/>
    </location>
</feature>
<feature type="region of interest" description="Disordered" evidence="2">
    <location>
        <begin position="1"/>
        <end position="27"/>
    </location>
</feature>
<feature type="binding site" evidence="1">
    <location>
        <position position="100"/>
    </location>
    <ligand>
        <name>Zn(2+)</name>
        <dbReference type="ChEBI" id="CHEBI:29105"/>
    </ligand>
</feature>
<feature type="binding site" evidence="1">
    <location>
        <position position="103"/>
    </location>
    <ligand>
        <name>Zn(2+)</name>
        <dbReference type="ChEBI" id="CHEBI:29105"/>
    </ligand>
</feature>
<feature type="binding site" evidence="1">
    <location>
        <position position="172"/>
    </location>
    <ligand>
        <name>Zn(2+)</name>
        <dbReference type="ChEBI" id="CHEBI:29105"/>
    </ligand>
</feature>
<evidence type="ECO:0000255" key="1">
    <source>
        <dbReference type="HAMAP-Rule" id="MF_00223"/>
    </source>
</evidence>
<evidence type="ECO:0000256" key="2">
    <source>
        <dbReference type="SAM" id="MobiDB-lite"/>
    </source>
</evidence>
<keyword id="KW-0342">GTP-binding</keyword>
<keyword id="KW-0378">Hydrolase</keyword>
<keyword id="KW-0479">Metal-binding</keyword>
<keyword id="KW-0547">Nucleotide-binding</keyword>
<keyword id="KW-0554">One-carbon metabolism</keyword>
<keyword id="KW-1185">Reference proteome</keyword>
<keyword id="KW-0862">Zinc</keyword>
<dbReference type="EC" id="3.5.4.16" evidence="1"/>
<dbReference type="EMBL" id="CP001016">
    <property type="protein sequence ID" value="ACB95208.1"/>
    <property type="molecule type" value="Genomic_DNA"/>
</dbReference>
<dbReference type="RefSeq" id="WP_012384565.1">
    <property type="nucleotide sequence ID" value="NC_010581.1"/>
</dbReference>
<dbReference type="SMR" id="B2IBC4"/>
<dbReference type="STRING" id="395963.Bind_1576"/>
<dbReference type="KEGG" id="bid:Bind_1576"/>
<dbReference type="eggNOG" id="COG0302">
    <property type="taxonomic scope" value="Bacteria"/>
</dbReference>
<dbReference type="HOGENOM" id="CLU_049768_3_1_5"/>
<dbReference type="OrthoDB" id="9801207at2"/>
<dbReference type="UniPathway" id="UPA00848">
    <property type="reaction ID" value="UER00151"/>
</dbReference>
<dbReference type="Proteomes" id="UP000001695">
    <property type="component" value="Chromosome"/>
</dbReference>
<dbReference type="GO" id="GO:0005737">
    <property type="term" value="C:cytoplasm"/>
    <property type="evidence" value="ECO:0007669"/>
    <property type="project" value="TreeGrafter"/>
</dbReference>
<dbReference type="GO" id="GO:0005525">
    <property type="term" value="F:GTP binding"/>
    <property type="evidence" value="ECO:0007669"/>
    <property type="project" value="UniProtKB-KW"/>
</dbReference>
<dbReference type="GO" id="GO:0003934">
    <property type="term" value="F:GTP cyclohydrolase I activity"/>
    <property type="evidence" value="ECO:0007669"/>
    <property type="project" value="UniProtKB-UniRule"/>
</dbReference>
<dbReference type="GO" id="GO:0008270">
    <property type="term" value="F:zinc ion binding"/>
    <property type="evidence" value="ECO:0007669"/>
    <property type="project" value="UniProtKB-UniRule"/>
</dbReference>
<dbReference type="GO" id="GO:0006730">
    <property type="term" value="P:one-carbon metabolic process"/>
    <property type="evidence" value="ECO:0007669"/>
    <property type="project" value="UniProtKB-UniRule"/>
</dbReference>
<dbReference type="GO" id="GO:0006729">
    <property type="term" value="P:tetrahydrobiopterin biosynthetic process"/>
    <property type="evidence" value="ECO:0007669"/>
    <property type="project" value="TreeGrafter"/>
</dbReference>
<dbReference type="GO" id="GO:0046654">
    <property type="term" value="P:tetrahydrofolate biosynthetic process"/>
    <property type="evidence" value="ECO:0007669"/>
    <property type="project" value="UniProtKB-UniRule"/>
</dbReference>
<dbReference type="FunFam" id="1.10.286.10:FF:000001">
    <property type="entry name" value="GTP cyclohydrolase 1"/>
    <property type="match status" value="1"/>
</dbReference>
<dbReference type="FunFam" id="3.30.1130.10:FF:000001">
    <property type="entry name" value="GTP cyclohydrolase 1"/>
    <property type="match status" value="1"/>
</dbReference>
<dbReference type="Gene3D" id="1.10.286.10">
    <property type="match status" value="1"/>
</dbReference>
<dbReference type="Gene3D" id="3.30.1130.10">
    <property type="match status" value="1"/>
</dbReference>
<dbReference type="HAMAP" id="MF_00223">
    <property type="entry name" value="FolE"/>
    <property type="match status" value="1"/>
</dbReference>
<dbReference type="InterPro" id="IPR043133">
    <property type="entry name" value="GTP-CH-I_C/QueF"/>
</dbReference>
<dbReference type="InterPro" id="IPR043134">
    <property type="entry name" value="GTP-CH-I_N"/>
</dbReference>
<dbReference type="InterPro" id="IPR001474">
    <property type="entry name" value="GTP_CycHdrlase_I"/>
</dbReference>
<dbReference type="InterPro" id="IPR018234">
    <property type="entry name" value="GTP_CycHdrlase_I_CS"/>
</dbReference>
<dbReference type="InterPro" id="IPR020602">
    <property type="entry name" value="GTP_CycHdrlase_I_dom"/>
</dbReference>
<dbReference type="NCBIfam" id="TIGR00063">
    <property type="entry name" value="folE"/>
    <property type="match status" value="1"/>
</dbReference>
<dbReference type="NCBIfam" id="NF006825">
    <property type="entry name" value="PRK09347.1-2"/>
    <property type="match status" value="1"/>
</dbReference>
<dbReference type="NCBIfam" id="NF006826">
    <property type="entry name" value="PRK09347.1-3"/>
    <property type="match status" value="1"/>
</dbReference>
<dbReference type="PANTHER" id="PTHR11109:SF7">
    <property type="entry name" value="GTP CYCLOHYDROLASE 1"/>
    <property type="match status" value="1"/>
</dbReference>
<dbReference type="PANTHER" id="PTHR11109">
    <property type="entry name" value="GTP CYCLOHYDROLASE I"/>
    <property type="match status" value="1"/>
</dbReference>
<dbReference type="Pfam" id="PF01227">
    <property type="entry name" value="GTP_cyclohydroI"/>
    <property type="match status" value="1"/>
</dbReference>
<dbReference type="SUPFAM" id="SSF55620">
    <property type="entry name" value="Tetrahydrobiopterin biosynthesis enzymes-like"/>
    <property type="match status" value="1"/>
</dbReference>
<dbReference type="PROSITE" id="PS00859">
    <property type="entry name" value="GTP_CYCLOHYDROL_1_1"/>
    <property type="match status" value="1"/>
</dbReference>
<dbReference type="PROSITE" id="PS00860">
    <property type="entry name" value="GTP_CYCLOHYDROL_1_2"/>
    <property type="match status" value="1"/>
</dbReference>
<name>GCH1_BEII9</name>
<sequence length="213" mass="23769">MDDVVKSLLQRTTSSLTKPAPARPSREEAEAAVEVLLRWTGDDPSREGLRDTPKRVVKAFEEFFSGYNADASDVLSRVFEEVHGYDNMVLVRDIPFSSHCEHHMVPFFGVAHIGYYPSEAGVIGLSKLARLVDIFAKRLQTQEALTAQIIGAIDEHLQPRGCAIMLEAEHMCMSMRGVQKHGTSTLTTQFTGVFKNDPAEQVRFFGMVRNPKS</sequence>
<gene>
    <name evidence="1" type="primary">folE</name>
    <name type="ordered locus">Bind_1576</name>
</gene>
<protein>
    <recommendedName>
        <fullName evidence="1">GTP cyclohydrolase 1</fullName>
        <ecNumber evidence="1">3.5.4.16</ecNumber>
    </recommendedName>
    <alternativeName>
        <fullName evidence="1">GTP cyclohydrolase I</fullName>
        <shortName evidence="1">GTP-CH-I</shortName>
    </alternativeName>
</protein>
<organism>
    <name type="scientific">Beijerinckia indica subsp. indica (strain ATCC 9039 / DSM 1715 / NCIMB 8712)</name>
    <dbReference type="NCBI Taxonomy" id="395963"/>
    <lineage>
        <taxon>Bacteria</taxon>
        <taxon>Pseudomonadati</taxon>
        <taxon>Pseudomonadota</taxon>
        <taxon>Alphaproteobacteria</taxon>
        <taxon>Hyphomicrobiales</taxon>
        <taxon>Beijerinckiaceae</taxon>
        <taxon>Beijerinckia</taxon>
    </lineage>
</organism>
<proteinExistence type="inferred from homology"/>
<accession>B2IBC4</accession>
<reference key="1">
    <citation type="journal article" date="2010" name="J. Bacteriol.">
        <title>Complete genome sequence of Beijerinckia indica subsp. indica.</title>
        <authorList>
            <person name="Tamas I."/>
            <person name="Dedysh S.N."/>
            <person name="Liesack W."/>
            <person name="Stott M.B."/>
            <person name="Alam M."/>
            <person name="Murrell J.C."/>
            <person name="Dunfield P.F."/>
        </authorList>
    </citation>
    <scope>NUCLEOTIDE SEQUENCE [LARGE SCALE GENOMIC DNA]</scope>
    <source>
        <strain>ATCC 9039 / DSM 1715 / NCIMB 8712</strain>
    </source>
</reference>
<comment type="catalytic activity">
    <reaction evidence="1">
        <text>GTP + H2O = 7,8-dihydroneopterin 3'-triphosphate + formate + H(+)</text>
        <dbReference type="Rhea" id="RHEA:17473"/>
        <dbReference type="ChEBI" id="CHEBI:15377"/>
        <dbReference type="ChEBI" id="CHEBI:15378"/>
        <dbReference type="ChEBI" id="CHEBI:15740"/>
        <dbReference type="ChEBI" id="CHEBI:37565"/>
        <dbReference type="ChEBI" id="CHEBI:58462"/>
        <dbReference type="EC" id="3.5.4.16"/>
    </reaction>
</comment>
<comment type="pathway">
    <text evidence="1">Cofactor biosynthesis; 7,8-dihydroneopterin triphosphate biosynthesis; 7,8-dihydroneopterin triphosphate from GTP: step 1/1.</text>
</comment>
<comment type="subunit">
    <text evidence="1">Homomer.</text>
</comment>
<comment type="similarity">
    <text evidence="1">Belongs to the GTP cyclohydrolase I family.</text>
</comment>